<organism>
    <name type="scientific">Natranaerobius thermophilus (strain ATCC BAA-1301 / DSM 18059 / JW/NM-WN-LF)</name>
    <dbReference type="NCBI Taxonomy" id="457570"/>
    <lineage>
        <taxon>Bacteria</taxon>
        <taxon>Bacillati</taxon>
        <taxon>Bacillota</taxon>
        <taxon>Clostridia</taxon>
        <taxon>Natranaerobiales</taxon>
        <taxon>Natranaerobiaceae</taxon>
        <taxon>Natranaerobius</taxon>
    </lineage>
</organism>
<protein>
    <recommendedName>
        <fullName evidence="1">Large ribosomal subunit protein uL4</fullName>
    </recommendedName>
    <alternativeName>
        <fullName evidence="3">50S ribosomal protein L4</fullName>
    </alternativeName>
</protein>
<sequence>MPKVALYNNEGSQVGEITLDDSIFATDINETLMHEAVNMHLASKRRGTASAKTRSEVRGGGRKPWRQKGTGRARHGSIRSPIWVGGGISFAPKPRDYSYKMPKKAKRKAIKSALTTKLNNGEIVILEELTMEAPKTKKIIEMLENLSINHKAMIVTGASDLNVYRSTRNIPGVSSALANNLNVYDVLNHDYLVLTKDAVSVIEEVFC</sequence>
<evidence type="ECO:0000255" key="1">
    <source>
        <dbReference type="HAMAP-Rule" id="MF_01328"/>
    </source>
</evidence>
<evidence type="ECO:0000256" key="2">
    <source>
        <dbReference type="SAM" id="MobiDB-lite"/>
    </source>
</evidence>
<evidence type="ECO:0000305" key="3"/>
<keyword id="KW-1185">Reference proteome</keyword>
<keyword id="KW-0687">Ribonucleoprotein</keyword>
<keyword id="KW-0689">Ribosomal protein</keyword>
<keyword id="KW-0694">RNA-binding</keyword>
<keyword id="KW-0699">rRNA-binding</keyword>
<name>RL4_NATTJ</name>
<comment type="function">
    <text evidence="1">One of the primary rRNA binding proteins, this protein initially binds near the 5'-end of the 23S rRNA. It is important during the early stages of 50S assembly. It makes multiple contacts with different domains of the 23S rRNA in the assembled 50S subunit and ribosome.</text>
</comment>
<comment type="function">
    <text evidence="1">Forms part of the polypeptide exit tunnel.</text>
</comment>
<comment type="subunit">
    <text evidence="1">Part of the 50S ribosomal subunit.</text>
</comment>
<comment type="similarity">
    <text evidence="1">Belongs to the universal ribosomal protein uL4 family.</text>
</comment>
<proteinExistence type="inferred from homology"/>
<dbReference type="EMBL" id="CP001034">
    <property type="protein sequence ID" value="ACB83794.1"/>
    <property type="molecule type" value="Genomic_DNA"/>
</dbReference>
<dbReference type="RefSeq" id="WP_012446683.1">
    <property type="nucleotide sequence ID" value="NC_010718.1"/>
</dbReference>
<dbReference type="SMR" id="B2A4E0"/>
<dbReference type="FunCoup" id="B2A4E0">
    <property type="interactions" value="425"/>
</dbReference>
<dbReference type="STRING" id="457570.Nther_0195"/>
<dbReference type="KEGG" id="nth:Nther_0195"/>
<dbReference type="eggNOG" id="COG0088">
    <property type="taxonomic scope" value="Bacteria"/>
</dbReference>
<dbReference type="HOGENOM" id="CLU_041575_5_2_9"/>
<dbReference type="InParanoid" id="B2A4E0"/>
<dbReference type="OrthoDB" id="9803201at2"/>
<dbReference type="Proteomes" id="UP000001683">
    <property type="component" value="Chromosome"/>
</dbReference>
<dbReference type="GO" id="GO:1990904">
    <property type="term" value="C:ribonucleoprotein complex"/>
    <property type="evidence" value="ECO:0007669"/>
    <property type="project" value="UniProtKB-KW"/>
</dbReference>
<dbReference type="GO" id="GO:0005840">
    <property type="term" value="C:ribosome"/>
    <property type="evidence" value="ECO:0007669"/>
    <property type="project" value="UniProtKB-KW"/>
</dbReference>
<dbReference type="GO" id="GO:0019843">
    <property type="term" value="F:rRNA binding"/>
    <property type="evidence" value="ECO:0007669"/>
    <property type="project" value="UniProtKB-UniRule"/>
</dbReference>
<dbReference type="GO" id="GO:0003735">
    <property type="term" value="F:structural constituent of ribosome"/>
    <property type="evidence" value="ECO:0007669"/>
    <property type="project" value="InterPro"/>
</dbReference>
<dbReference type="GO" id="GO:0006412">
    <property type="term" value="P:translation"/>
    <property type="evidence" value="ECO:0007669"/>
    <property type="project" value="UniProtKB-UniRule"/>
</dbReference>
<dbReference type="Gene3D" id="3.40.1370.10">
    <property type="match status" value="1"/>
</dbReference>
<dbReference type="HAMAP" id="MF_01328_B">
    <property type="entry name" value="Ribosomal_uL4_B"/>
    <property type="match status" value="1"/>
</dbReference>
<dbReference type="InterPro" id="IPR002136">
    <property type="entry name" value="Ribosomal_uL4"/>
</dbReference>
<dbReference type="InterPro" id="IPR013005">
    <property type="entry name" value="Ribosomal_uL4-like"/>
</dbReference>
<dbReference type="InterPro" id="IPR023574">
    <property type="entry name" value="Ribosomal_uL4_dom_sf"/>
</dbReference>
<dbReference type="NCBIfam" id="TIGR03953">
    <property type="entry name" value="rplD_bact"/>
    <property type="match status" value="1"/>
</dbReference>
<dbReference type="PANTHER" id="PTHR10746">
    <property type="entry name" value="50S RIBOSOMAL PROTEIN L4"/>
    <property type="match status" value="1"/>
</dbReference>
<dbReference type="PANTHER" id="PTHR10746:SF6">
    <property type="entry name" value="LARGE RIBOSOMAL SUBUNIT PROTEIN UL4M"/>
    <property type="match status" value="1"/>
</dbReference>
<dbReference type="Pfam" id="PF00573">
    <property type="entry name" value="Ribosomal_L4"/>
    <property type="match status" value="1"/>
</dbReference>
<dbReference type="SUPFAM" id="SSF52166">
    <property type="entry name" value="Ribosomal protein L4"/>
    <property type="match status" value="1"/>
</dbReference>
<accession>B2A4E0</accession>
<gene>
    <name evidence="1" type="primary">rplD</name>
    <name type="ordered locus">Nther_0195</name>
</gene>
<reference key="1">
    <citation type="submission" date="2008-04" db="EMBL/GenBank/DDBJ databases">
        <title>Complete sequence of chromosome of Natranaerobius thermophilus JW/NM-WN-LF.</title>
        <authorList>
            <consortium name="US DOE Joint Genome Institute"/>
            <person name="Copeland A."/>
            <person name="Lucas S."/>
            <person name="Lapidus A."/>
            <person name="Glavina del Rio T."/>
            <person name="Dalin E."/>
            <person name="Tice H."/>
            <person name="Bruce D."/>
            <person name="Goodwin L."/>
            <person name="Pitluck S."/>
            <person name="Chertkov O."/>
            <person name="Brettin T."/>
            <person name="Detter J.C."/>
            <person name="Han C."/>
            <person name="Kuske C.R."/>
            <person name="Schmutz J."/>
            <person name="Larimer F."/>
            <person name="Land M."/>
            <person name="Hauser L."/>
            <person name="Kyrpides N."/>
            <person name="Lykidis A."/>
            <person name="Mesbah N.M."/>
            <person name="Wiegel J."/>
        </authorList>
    </citation>
    <scope>NUCLEOTIDE SEQUENCE [LARGE SCALE GENOMIC DNA]</scope>
    <source>
        <strain>ATCC BAA-1301 / DSM 18059 / JW/NM-WN-LF</strain>
    </source>
</reference>
<feature type="chain" id="PRO_1000142159" description="Large ribosomal subunit protein uL4">
    <location>
        <begin position="1"/>
        <end position="207"/>
    </location>
</feature>
<feature type="region of interest" description="Disordered" evidence="2">
    <location>
        <begin position="44"/>
        <end position="76"/>
    </location>
</feature>
<feature type="compositionally biased region" description="Basic residues" evidence="2">
    <location>
        <begin position="60"/>
        <end position="76"/>
    </location>
</feature>